<accession>A6VNK4</accession>
<gene>
    <name evidence="1" type="primary">gloB</name>
    <name type="ordered locus">Asuc_1187</name>
</gene>
<dbReference type="EC" id="3.1.2.6" evidence="1"/>
<dbReference type="EMBL" id="CP000746">
    <property type="protein sequence ID" value="ABR74551.1"/>
    <property type="molecule type" value="Genomic_DNA"/>
</dbReference>
<dbReference type="RefSeq" id="WP_012072928.1">
    <property type="nucleotide sequence ID" value="NC_009655.1"/>
</dbReference>
<dbReference type="SMR" id="A6VNK4"/>
<dbReference type="STRING" id="339671.Asuc_1187"/>
<dbReference type="KEGG" id="asu:Asuc_1187"/>
<dbReference type="eggNOG" id="COG0491">
    <property type="taxonomic scope" value="Bacteria"/>
</dbReference>
<dbReference type="HOGENOM" id="CLU_030571_4_1_6"/>
<dbReference type="OrthoDB" id="9802248at2"/>
<dbReference type="UniPathway" id="UPA00619">
    <property type="reaction ID" value="UER00676"/>
</dbReference>
<dbReference type="Proteomes" id="UP000001114">
    <property type="component" value="Chromosome"/>
</dbReference>
<dbReference type="GO" id="GO:0004416">
    <property type="term" value="F:hydroxyacylglutathione hydrolase activity"/>
    <property type="evidence" value="ECO:0007669"/>
    <property type="project" value="UniProtKB-UniRule"/>
</dbReference>
<dbReference type="GO" id="GO:0046872">
    <property type="term" value="F:metal ion binding"/>
    <property type="evidence" value="ECO:0007669"/>
    <property type="project" value="UniProtKB-KW"/>
</dbReference>
<dbReference type="GO" id="GO:0019243">
    <property type="term" value="P:methylglyoxal catabolic process to D-lactate via S-lactoyl-glutathione"/>
    <property type="evidence" value="ECO:0007669"/>
    <property type="project" value="InterPro"/>
</dbReference>
<dbReference type="CDD" id="cd07723">
    <property type="entry name" value="hydroxyacylglutathione_hydrolase_MBL-fold"/>
    <property type="match status" value="1"/>
</dbReference>
<dbReference type="Gene3D" id="3.60.15.10">
    <property type="entry name" value="Ribonuclease Z/Hydroxyacylglutathione hydrolase-like"/>
    <property type="match status" value="1"/>
</dbReference>
<dbReference type="HAMAP" id="MF_01374">
    <property type="entry name" value="Glyoxalase_2"/>
    <property type="match status" value="1"/>
</dbReference>
<dbReference type="InterPro" id="IPR035680">
    <property type="entry name" value="Clx_II_MBL"/>
</dbReference>
<dbReference type="InterPro" id="IPR050110">
    <property type="entry name" value="Glyoxalase_II_hydrolase"/>
</dbReference>
<dbReference type="InterPro" id="IPR032282">
    <property type="entry name" value="HAGH_C"/>
</dbReference>
<dbReference type="InterPro" id="IPR017782">
    <property type="entry name" value="Hydroxyacylglutathione_Hdrlase"/>
</dbReference>
<dbReference type="InterPro" id="IPR001279">
    <property type="entry name" value="Metallo-B-lactamas"/>
</dbReference>
<dbReference type="InterPro" id="IPR036866">
    <property type="entry name" value="RibonucZ/Hydroxyglut_hydro"/>
</dbReference>
<dbReference type="NCBIfam" id="TIGR03413">
    <property type="entry name" value="GSH_gloB"/>
    <property type="match status" value="1"/>
</dbReference>
<dbReference type="PANTHER" id="PTHR43705">
    <property type="entry name" value="HYDROXYACYLGLUTATHIONE HYDROLASE"/>
    <property type="match status" value="1"/>
</dbReference>
<dbReference type="PANTHER" id="PTHR43705:SF1">
    <property type="entry name" value="HYDROXYACYLGLUTATHIONE HYDROLASE GLOB"/>
    <property type="match status" value="1"/>
</dbReference>
<dbReference type="Pfam" id="PF16123">
    <property type="entry name" value="HAGH_C"/>
    <property type="match status" value="1"/>
</dbReference>
<dbReference type="Pfam" id="PF00753">
    <property type="entry name" value="Lactamase_B"/>
    <property type="match status" value="2"/>
</dbReference>
<dbReference type="SMART" id="SM00849">
    <property type="entry name" value="Lactamase_B"/>
    <property type="match status" value="1"/>
</dbReference>
<dbReference type="SUPFAM" id="SSF56281">
    <property type="entry name" value="Metallo-hydrolase/oxidoreductase"/>
    <property type="match status" value="1"/>
</dbReference>
<proteinExistence type="inferred from homology"/>
<feature type="chain" id="PRO_1000087275" description="Hydroxyacylglutathione hydrolase">
    <location>
        <begin position="1"/>
        <end position="233"/>
    </location>
</feature>
<feature type="binding site" evidence="1">
    <location>
        <position position="52"/>
    </location>
    <ligand>
        <name>Zn(2+)</name>
        <dbReference type="ChEBI" id="CHEBI:29105"/>
        <label>1</label>
    </ligand>
</feature>
<feature type="binding site" evidence="1">
    <location>
        <position position="54"/>
    </location>
    <ligand>
        <name>Zn(2+)</name>
        <dbReference type="ChEBI" id="CHEBI:29105"/>
        <label>1</label>
    </ligand>
</feature>
<feature type="binding site" evidence="1">
    <location>
        <position position="56"/>
    </location>
    <ligand>
        <name>Zn(2+)</name>
        <dbReference type="ChEBI" id="CHEBI:29105"/>
        <label>2</label>
    </ligand>
</feature>
<feature type="binding site" evidence="1">
    <location>
        <position position="57"/>
    </location>
    <ligand>
        <name>Zn(2+)</name>
        <dbReference type="ChEBI" id="CHEBI:29105"/>
        <label>2</label>
    </ligand>
</feature>
<feature type="binding site" evidence="1">
    <location>
        <position position="108"/>
    </location>
    <ligand>
        <name>Zn(2+)</name>
        <dbReference type="ChEBI" id="CHEBI:29105"/>
        <label>1</label>
    </ligand>
</feature>
<feature type="binding site" evidence="1">
    <location>
        <position position="125"/>
    </location>
    <ligand>
        <name>Zn(2+)</name>
        <dbReference type="ChEBI" id="CHEBI:29105"/>
        <label>1</label>
    </ligand>
</feature>
<feature type="binding site" evidence="1">
    <location>
        <position position="125"/>
    </location>
    <ligand>
        <name>Zn(2+)</name>
        <dbReference type="ChEBI" id="CHEBI:29105"/>
        <label>2</label>
    </ligand>
</feature>
<feature type="binding site" evidence="1">
    <location>
        <position position="163"/>
    </location>
    <ligand>
        <name>Zn(2+)</name>
        <dbReference type="ChEBI" id="CHEBI:29105"/>
        <label>2</label>
    </ligand>
</feature>
<evidence type="ECO:0000255" key="1">
    <source>
        <dbReference type="HAMAP-Rule" id="MF_01374"/>
    </source>
</evidence>
<protein>
    <recommendedName>
        <fullName evidence="1">Hydroxyacylglutathione hydrolase</fullName>
        <ecNumber evidence="1">3.1.2.6</ecNumber>
    </recommendedName>
    <alternativeName>
        <fullName evidence="1">Glyoxalase II</fullName>
        <shortName evidence="1">Glx II</shortName>
    </alternativeName>
</protein>
<keyword id="KW-0378">Hydrolase</keyword>
<keyword id="KW-0479">Metal-binding</keyword>
<keyword id="KW-1185">Reference proteome</keyword>
<keyword id="KW-0862">Zinc</keyword>
<sequence>MLKPISALNDNYIWVYGRENCPVIVVDITEIEPLLPFLRENKFAVEAVLLTHKHDDHVGGVAAFKRYFPDVPVYGPQECADKGATRIVNEGEIVTANYRIRVIPTGGHTAQHVSYVTDGCLFCGDTLFSAGCGRVFTGNYGQMYDSVQRLKTLPDDTLVCPAHEYTLANLAFAESVMKDKSAVKNQRVLVEKKRAENRPSVPTTLGLEKQINPFLIAENPAQFETWRKAKDQF</sequence>
<reference key="1">
    <citation type="journal article" date="2010" name="BMC Genomics">
        <title>A genomic perspective on the potential of Actinobacillus succinogenes for industrial succinate production.</title>
        <authorList>
            <person name="McKinlay J.B."/>
            <person name="Laivenieks M."/>
            <person name="Schindler B.D."/>
            <person name="McKinlay A.A."/>
            <person name="Siddaramappa S."/>
            <person name="Challacombe J.F."/>
            <person name="Lowry S.R."/>
            <person name="Clum A."/>
            <person name="Lapidus A.L."/>
            <person name="Burkhart K.B."/>
            <person name="Harkins V."/>
            <person name="Vieille C."/>
        </authorList>
    </citation>
    <scope>NUCLEOTIDE SEQUENCE [LARGE SCALE GENOMIC DNA]</scope>
    <source>
        <strain>ATCC 55618 / DSM 22257 / CCUG 43843 / 130Z</strain>
    </source>
</reference>
<comment type="function">
    <text evidence="1">Thiolesterase that catalyzes the hydrolysis of S-D-lactoyl-glutathione to form glutathione and D-lactic acid.</text>
</comment>
<comment type="catalytic activity">
    <reaction evidence="1">
        <text>an S-(2-hydroxyacyl)glutathione + H2O = a 2-hydroxy carboxylate + glutathione + H(+)</text>
        <dbReference type="Rhea" id="RHEA:21864"/>
        <dbReference type="ChEBI" id="CHEBI:15377"/>
        <dbReference type="ChEBI" id="CHEBI:15378"/>
        <dbReference type="ChEBI" id="CHEBI:57925"/>
        <dbReference type="ChEBI" id="CHEBI:58896"/>
        <dbReference type="ChEBI" id="CHEBI:71261"/>
        <dbReference type="EC" id="3.1.2.6"/>
    </reaction>
</comment>
<comment type="cofactor">
    <cofactor evidence="1">
        <name>Zn(2+)</name>
        <dbReference type="ChEBI" id="CHEBI:29105"/>
    </cofactor>
    <text evidence="1">Binds 2 Zn(2+) ions per subunit.</text>
</comment>
<comment type="pathway">
    <text evidence="1">Secondary metabolite metabolism; methylglyoxal degradation; (R)-lactate from methylglyoxal: step 2/2.</text>
</comment>
<comment type="subunit">
    <text evidence="1">Monomer.</text>
</comment>
<comment type="similarity">
    <text evidence="1">Belongs to the metallo-beta-lactamase superfamily. Glyoxalase II family.</text>
</comment>
<name>GLO2_ACTSZ</name>
<organism>
    <name type="scientific">Actinobacillus succinogenes (strain ATCC 55618 / DSM 22257 / CCUG 43843 / 130Z)</name>
    <dbReference type="NCBI Taxonomy" id="339671"/>
    <lineage>
        <taxon>Bacteria</taxon>
        <taxon>Pseudomonadati</taxon>
        <taxon>Pseudomonadota</taxon>
        <taxon>Gammaproteobacteria</taxon>
        <taxon>Pasteurellales</taxon>
        <taxon>Pasteurellaceae</taxon>
        <taxon>Actinobacillus</taxon>
    </lineage>
</organism>